<name>FA83G_XENLA</name>
<sequence length="933" mass="103913">MALSQLQCLDNNHVNWRTSEGKAEFFYSEEQRLALEALLSQGVDAFHGVVKGENIRDFLSELEMSRVLSRLEPFDPDCCHCRPDGEEGDEGIGEQDGAQSLEYWPDRSDCSIPDLDLGWPEAFAYRGVTRATVYMQPPVDGQPHIKEVVRKMINQAQKVIAVVMDHFTDIDIFRDLLDAGFKRKVSVYVILNETDVKYFLQMCEKAQMHKGHVKNLRIRTVGGSEFYTRFSTKFKGSLGQKFMFVDGDKAICGSYSFTWSASRIDRNLITMLSGQVVETFDRQFQDLYLLSKGVSLKNIPMENEPEPEPVLQTATVPTAVSESIAKKLINPKYSLVKTKSASDTGAEKEKNSSNCNNMATKPKPKPTEQPPQEQKHPALHNMEKANMFDYLPTWVEPDPEPGSDILGYINIIDPTIKNPHLSQMNRIKIWDTSQATAQFLLDKEQELKQTECQKGSETSQEQTSSKVETHEPYSEKEKSGHGYSETTTVKKEEESSENLVHTSKVDQGRMEHSPSKATSLTQVSQQNQSMDLNEAEKSPSQSRGSKASQTSQGKESMPSNSSGVTLGGQTVSNTEESSVASPGPYEDLEKEPVKDTVDELEDTSIKDPPLENFESLLKSQHLIIPSNTEPVTGPPVPKPRTLPVADFINMKNAQNANIGSPSPCLADSIMPSVNGLDTEGTEDTTHSEKAEEDSDEGVQYFSSGSGSLPPSSSSSVSEEYYLTTSVQRRNSEDPVYNGEFFPVQRKMSEGHISRGSFLSPFHFRQTVMDLGQMENGQRRNPGLEQELQMAMADRHPMHGNEMIYSMEPTQGKPVYPFGTNGLSPSYERLQMHRQAKNPGRARGREESTGVLRGYPQIRNPEGLALRHGFWGPSHAANQPSPLTSNPMPAEHPSTPFGIPFSKLAQAKHLKTKMGASNLDSRRRGHGYLGHKDQ</sequence>
<keyword id="KW-0963">Cytoplasm</keyword>
<keyword id="KW-0539">Nucleus</keyword>
<keyword id="KW-1185">Reference proteome</keyword>
<proteinExistence type="evidence at transcript level"/>
<gene>
    <name type="primary">fam83g</name>
</gene>
<feature type="chain" id="PRO_0000330819" description="Protein FAM83G">
    <location>
        <begin position="1"/>
        <end position="933"/>
    </location>
</feature>
<feature type="region of interest" description="Disordered" evidence="2">
    <location>
        <begin position="339"/>
        <end position="375"/>
    </location>
</feature>
<feature type="region of interest" description="Disordered" evidence="2">
    <location>
        <begin position="450"/>
        <end position="716"/>
    </location>
</feature>
<feature type="region of interest" description="Disordered" evidence="2">
    <location>
        <begin position="870"/>
        <end position="899"/>
    </location>
</feature>
<feature type="region of interest" description="Disordered" evidence="2">
    <location>
        <begin position="911"/>
        <end position="933"/>
    </location>
</feature>
<feature type="compositionally biased region" description="Polar residues" evidence="2">
    <location>
        <begin position="452"/>
        <end position="466"/>
    </location>
</feature>
<feature type="compositionally biased region" description="Basic and acidic residues" evidence="2">
    <location>
        <begin position="467"/>
        <end position="480"/>
    </location>
</feature>
<feature type="compositionally biased region" description="Basic and acidic residues" evidence="2">
    <location>
        <begin position="503"/>
        <end position="514"/>
    </location>
</feature>
<feature type="compositionally biased region" description="Polar residues" evidence="2">
    <location>
        <begin position="515"/>
        <end position="531"/>
    </location>
</feature>
<feature type="compositionally biased region" description="Polar residues" evidence="2">
    <location>
        <begin position="538"/>
        <end position="580"/>
    </location>
</feature>
<feature type="compositionally biased region" description="Basic and acidic residues" evidence="2">
    <location>
        <begin position="590"/>
        <end position="609"/>
    </location>
</feature>
<feature type="compositionally biased region" description="Polar residues" evidence="2">
    <location>
        <begin position="651"/>
        <end position="660"/>
    </location>
</feature>
<feature type="compositionally biased region" description="Low complexity" evidence="2">
    <location>
        <begin position="702"/>
        <end position="716"/>
    </location>
</feature>
<feature type="compositionally biased region" description="Polar residues" evidence="2">
    <location>
        <begin position="875"/>
        <end position="886"/>
    </location>
</feature>
<organism>
    <name type="scientific">Xenopus laevis</name>
    <name type="common">African clawed frog</name>
    <dbReference type="NCBI Taxonomy" id="8355"/>
    <lineage>
        <taxon>Eukaryota</taxon>
        <taxon>Metazoa</taxon>
        <taxon>Chordata</taxon>
        <taxon>Craniata</taxon>
        <taxon>Vertebrata</taxon>
        <taxon>Euteleostomi</taxon>
        <taxon>Amphibia</taxon>
        <taxon>Batrachia</taxon>
        <taxon>Anura</taxon>
        <taxon>Pipoidea</taxon>
        <taxon>Pipidae</taxon>
        <taxon>Xenopodinae</taxon>
        <taxon>Xenopus</taxon>
        <taxon>Xenopus</taxon>
    </lineage>
</organism>
<accession>Q5XK72</accession>
<reference key="1">
    <citation type="submission" date="2004-09" db="EMBL/GenBank/DDBJ databases">
        <authorList>
            <consortium name="NIH - Xenopus Gene Collection (XGC) project"/>
        </authorList>
    </citation>
    <scope>NUCLEOTIDE SEQUENCE [LARGE SCALE MRNA]</scope>
    <source>
        <tissue>Embryo</tissue>
    </source>
</reference>
<evidence type="ECO:0000250" key="1">
    <source>
        <dbReference type="UniProtKB" id="A6ND36"/>
    </source>
</evidence>
<evidence type="ECO:0000256" key="2">
    <source>
        <dbReference type="SAM" id="MobiDB-lite"/>
    </source>
</evidence>
<evidence type="ECO:0000305" key="3"/>
<protein>
    <recommendedName>
        <fullName>Protein FAM83G</fullName>
    </recommendedName>
</protein>
<dbReference type="EMBL" id="BC083043">
    <property type="protein sequence ID" value="AAH83043.1"/>
    <property type="molecule type" value="mRNA"/>
</dbReference>
<dbReference type="RefSeq" id="NP_001088152.1">
    <property type="nucleotide sequence ID" value="NM_001094683.1"/>
</dbReference>
<dbReference type="SMR" id="Q5XK72"/>
<dbReference type="BioGRID" id="104939">
    <property type="interactions" value="1"/>
</dbReference>
<dbReference type="IntAct" id="Q5XK72">
    <property type="interactions" value="2"/>
</dbReference>
<dbReference type="GeneID" id="494859"/>
<dbReference type="KEGG" id="xla:494859"/>
<dbReference type="AGR" id="Xenbase:XB-GENE-6255059"/>
<dbReference type="CTD" id="494859"/>
<dbReference type="Xenbase" id="XB-GENE-6255059">
    <property type="gene designation" value="fam83g.L"/>
</dbReference>
<dbReference type="OrthoDB" id="6103632at2759"/>
<dbReference type="Proteomes" id="UP000186698">
    <property type="component" value="Chromosome 9_10L"/>
</dbReference>
<dbReference type="Bgee" id="494859">
    <property type="expression patterns" value="Expressed in zone of skin and 18 other cell types or tissues"/>
</dbReference>
<dbReference type="GO" id="GO:0005829">
    <property type="term" value="C:cytosol"/>
    <property type="evidence" value="ECO:0007669"/>
    <property type="project" value="UniProtKB-SubCell"/>
</dbReference>
<dbReference type="GO" id="GO:0005634">
    <property type="term" value="C:nucleus"/>
    <property type="evidence" value="ECO:0007669"/>
    <property type="project" value="UniProtKB-SubCell"/>
</dbReference>
<dbReference type="GO" id="GO:0019901">
    <property type="term" value="F:protein kinase binding"/>
    <property type="evidence" value="ECO:0000318"/>
    <property type="project" value="GO_Central"/>
</dbReference>
<dbReference type="GO" id="GO:0007165">
    <property type="term" value="P:signal transduction"/>
    <property type="evidence" value="ECO:0000318"/>
    <property type="project" value="GO_Central"/>
</dbReference>
<dbReference type="CDD" id="cd09187">
    <property type="entry name" value="PLDc_FAM83G_N"/>
    <property type="match status" value="1"/>
</dbReference>
<dbReference type="FunFam" id="3.30.870.10:FF:000004">
    <property type="entry name" value="protein FAM83H isoform X2"/>
    <property type="match status" value="1"/>
</dbReference>
<dbReference type="Gene3D" id="3.30.870.10">
    <property type="entry name" value="Endonuclease Chain A"/>
    <property type="match status" value="1"/>
</dbReference>
<dbReference type="InterPro" id="IPR050944">
    <property type="entry name" value="FAM83"/>
</dbReference>
<dbReference type="InterPro" id="IPR012461">
    <property type="entry name" value="SACK1"/>
</dbReference>
<dbReference type="PANTHER" id="PTHR16181">
    <property type="entry name" value="PROTEIN FAM83A-RELATED"/>
    <property type="match status" value="1"/>
</dbReference>
<dbReference type="PANTHER" id="PTHR16181:SF29">
    <property type="entry name" value="PROTEIN FAM83A-RELATED"/>
    <property type="match status" value="1"/>
</dbReference>
<dbReference type="Pfam" id="PF07894">
    <property type="entry name" value="SACK1"/>
    <property type="match status" value="1"/>
</dbReference>
<dbReference type="SUPFAM" id="SSF56024">
    <property type="entry name" value="Phospholipase D/nuclease"/>
    <property type="match status" value="1"/>
</dbReference>
<comment type="function">
    <text evidence="1">Substrate for type I BMP receptor kinase involved in regulation of some target genes of the BMP signaling pathway. May also play a role in other signaling pathways.</text>
</comment>
<comment type="subunit">
    <text evidence="1">Interacts with SMAD1 (via MH2 domain); in a SMAD4-independent manner.</text>
</comment>
<comment type="subcellular location">
    <subcellularLocation>
        <location evidence="1">Cytoplasm</location>
        <location evidence="1">Cytosol</location>
    </subcellularLocation>
    <subcellularLocation>
        <location evidence="1">Nucleus</location>
    </subcellularLocation>
</comment>
<comment type="similarity">
    <text evidence="3">Belongs to the FAM83 family.</text>
</comment>